<feature type="chain" id="PRO_0000189918" description="Phosphate acyltransferase">
    <location>
        <begin position="1"/>
        <end position="341"/>
    </location>
</feature>
<dbReference type="EC" id="2.3.1.274" evidence="1"/>
<dbReference type="EMBL" id="CR378666">
    <property type="protein sequence ID" value="CAG19603.1"/>
    <property type="molecule type" value="Genomic_DNA"/>
</dbReference>
<dbReference type="RefSeq" id="WP_011217933.1">
    <property type="nucleotide sequence ID" value="NC_006370.1"/>
</dbReference>
<dbReference type="SMR" id="Q6LSX3"/>
<dbReference type="STRING" id="298386.PBPRA1192"/>
<dbReference type="KEGG" id="ppr:PBPRA1192"/>
<dbReference type="eggNOG" id="COG0416">
    <property type="taxonomic scope" value="Bacteria"/>
</dbReference>
<dbReference type="HOGENOM" id="CLU_039379_1_0_6"/>
<dbReference type="UniPathway" id="UPA00085"/>
<dbReference type="Proteomes" id="UP000000593">
    <property type="component" value="Chromosome 1"/>
</dbReference>
<dbReference type="GO" id="GO:0005737">
    <property type="term" value="C:cytoplasm"/>
    <property type="evidence" value="ECO:0007669"/>
    <property type="project" value="UniProtKB-SubCell"/>
</dbReference>
<dbReference type="GO" id="GO:0043811">
    <property type="term" value="F:phosphate:acyl-[acyl carrier protein] acyltransferase activity"/>
    <property type="evidence" value="ECO:0007669"/>
    <property type="project" value="UniProtKB-UniRule"/>
</dbReference>
<dbReference type="GO" id="GO:0006633">
    <property type="term" value="P:fatty acid biosynthetic process"/>
    <property type="evidence" value="ECO:0007669"/>
    <property type="project" value="UniProtKB-UniRule"/>
</dbReference>
<dbReference type="GO" id="GO:0008654">
    <property type="term" value="P:phospholipid biosynthetic process"/>
    <property type="evidence" value="ECO:0007669"/>
    <property type="project" value="UniProtKB-KW"/>
</dbReference>
<dbReference type="Gene3D" id="3.40.718.10">
    <property type="entry name" value="Isopropylmalate Dehydrogenase"/>
    <property type="match status" value="1"/>
</dbReference>
<dbReference type="HAMAP" id="MF_00019">
    <property type="entry name" value="PlsX"/>
    <property type="match status" value="1"/>
</dbReference>
<dbReference type="InterPro" id="IPR003664">
    <property type="entry name" value="FA_synthesis"/>
</dbReference>
<dbReference type="InterPro" id="IPR012281">
    <property type="entry name" value="Phospholipid_synth_PlsX-like"/>
</dbReference>
<dbReference type="NCBIfam" id="TIGR00182">
    <property type="entry name" value="plsX"/>
    <property type="match status" value="1"/>
</dbReference>
<dbReference type="PANTHER" id="PTHR30100">
    <property type="entry name" value="FATTY ACID/PHOSPHOLIPID SYNTHESIS PROTEIN PLSX"/>
    <property type="match status" value="1"/>
</dbReference>
<dbReference type="PANTHER" id="PTHR30100:SF1">
    <property type="entry name" value="PHOSPHATE ACYLTRANSFERASE"/>
    <property type="match status" value="1"/>
</dbReference>
<dbReference type="Pfam" id="PF02504">
    <property type="entry name" value="FA_synthesis"/>
    <property type="match status" value="1"/>
</dbReference>
<dbReference type="PIRSF" id="PIRSF002465">
    <property type="entry name" value="Phsphlp_syn_PlsX"/>
    <property type="match status" value="1"/>
</dbReference>
<dbReference type="SUPFAM" id="SSF53659">
    <property type="entry name" value="Isocitrate/Isopropylmalate dehydrogenase-like"/>
    <property type="match status" value="1"/>
</dbReference>
<comment type="function">
    <text evidence="1">Catalyzes the reversible formation of acyl-phosphate (acyl-PO(4)) from acyl-[acyl-carrier-protein] (acyl-ACP). This enzyme utilizes acyl-ACP as fatty acyl donor, but not acyl-CoA.</text>
</comment>
<comment type="catalytic activity">
    <reaction evidence="1">
        <text>a fatty acyl-[ACP] + phosphate = an acyl phosphate + holo-[ACP]</text>
        <dbReference type="Rhea" id="RHEA:42292"/>
        <dbReference type="Rhea" id="RHEA-COMP:9685"/>
        <dbReference type="Rhea" id="RHEA-COMP:14125"/>
        <dbReference type="ChEBI" id="CHEBI:43474"/>
        <dbReference type="ChEBI" id="CHEBI:59918"/>
        <dbReference type="ChEBI" id="CHEBI:64479"/>
        <dbReference type="ChEBI" id="CHEBI:138651"/>
        <dbReference type="EC" id="2.3.1.274"/>
    </reaction>
</comment>
<comment type="pathway">
    <text evidence="1">Lipid metabolism; phospholipid metabolism.</text>
</comment>
<comment type="subunit">
    <text evidence="1">Homodimer. Probably interacts with PlsY.</text>
</comment>
<comment type="subcellular location">
    <subcellularLocation>
        <location evidence="1">Cytoplasm</location>
    </subcellularLocation>
    <text evidence="1">Associated with the membrane possibly through PlsY.</text>
</comment>
<comment type="similarity">
    <text evidence="1">Belongs to the PlsX family.</text>
</comment>
<keyword id="KW-0963">Cytoplasm</keyword>
<keyword id="KW-0444">Lipid biosynthesis</keyword>
<keyword id="KW-0443">Lipid metabolism</keyword>
<keyword id="KW-0594">Phospholipid biosynthesis</keyword>
<keyword id="KW-1208">Phospholipid metabolism</keyword>
<keyword id="KW-1185">Reference proteome</keyword>
<keyword id="KW-0808">Transferase</keyword>
<organism>
    <name type="scientific">Photobacterium profundum (strain SS9)</name>
    <dbReference type="NCBI Taxonomy" id="298386"/>
    <lineage>
        <taxon>Bacteria</taxon>
        <taxon>Pseudomonadati</taxon>
        <taxon>Pseudomonadota</taxon>
        <taxon>Gammaproteobacteria</taxon>
        <taxon>Vibrionales</taxon>
        <taxon>Vibrionaceae</taxon>
        <taxon>Photobacterium</taxon>
    </lineage>
</organism>
<accession>Q6LSX3</accession>
<name>PLSX_PHOPR</name>
<protein>
    <recommendedName>
        <fullName evidence="1">Phosphate acyltransferase</fullName>
        <ecNumber evidence="1">2.3.1.274</ecNumber>
    </recommendedName>
    <alternativeName>
        <fullName evidence="1">Acyl-ACP phosphotransacylase</fullName>
    </alternativeName>
    <alternativeName>
        <fullName evidence="1">Acyl-[acyl-carrier-protein]--phosphate acyltransferase</fullName>
    </alternativeName>
    <alternativeName>
        <fullName evidence="1">Phosphate-acyl-ACP acyltransferase</fullName>
    </alternativeName>
</protein>
<reference key="1">
    <citation type="journal article" date="2005" name="Science">
        <title>Life at depth: Photobacterium profundum genome sequence and expression analysis.</title>
        <authorList>
            <person name="Vezzi A."/>
            <person name="Campanaro S."/>
            <person name="D'Angelo M."/>
            <person name="Simonato F."/>
            <person name="Vitulo N."/>
            <person name="Lauro F.M."/>
            <person name="Cestaro A."/>
            <person name="Malacrida G."/>
            <person name="Simionati B."/>
            <person name="Cannata N."/>
            <person name="Romualdi C."/>
            <person name="Bartlett D.H."/>
            <person name="Valle G."/>
        </authorList>
    </citation>
    <scope>NUCLEOTIDE SEQUENCE [LARGE SCALE GENOMIC DNA]</scope>
    <source>
        <strain>ATCC BAA-1253 / SS9</strain>
    </source>
</reference>
<evidence type="ECO:0000255" key="1">
    <source>
        <dbReference type="HAMAP-Rule" id="MF_00019"/>
    </source>
</evidence>
<gene>
    <name evidence="1" type="primary">plsX</name>
    <name type="ordered locus">PBPRA1192</name>
</gene>
<sequence length="341" mass="36887">MTGLTVALDAMGGDFGPQVIVPAAVQALLQYPELKIKLYGDHSAITAQLSLLNQHSYSRISIIHSDLVIADETRPSHALRRSQGTSMRMALDAVSDGEADACVSAGNTGALMALSRYTLKQLPGVDRPALVSAIPTHGLNKTWLLDLGANVSCDADTLFQFAVMGSVLAEQSLTSKPRVALLNIGEEEIKGNDLVKRCAEMLSNSPDIHYIGYIEGDQLYAGKADVIVCDGFVGNVSLKTSEGVANLFINSFKQTISTNPMKRLLAKWLFRDLFVSLKKLNPDQYNGASLLGLRGIVVKSHGRADTAAFANAIGEAVHEVKRQIPTKISDRLEEVLLERHY</sequence>
<proteinExistence type="inferred from homology"/>